<name>TTC33_DANRE</name>
<keyword id="KW-1185">Reference proteome</keyword>
<keyword id="KW-0677">Repeat</keyword>
<keyword id="KW-0802">TPR repeat</keyword>
<dbReference type="EMBL" id="CR762390">
    <property type="protein sequence ID" value="CAM56588.1"/>
    <property type="molecule type" value="Genomic_DNA"/>
</dbReference>
<dbReference type="EMBL" id="BC075750">
    <property type="protein sequence ID" value="AAH75750.1"/>
    <property type="molecule type" value="mRNA"/>
</dbReference>
<dbReference type="RefSeq" id="NP_001002722.1">
    <property type="nucleotide sequence ID" value="NM_001002722.1"/>
</dbReference>
<dbReference type="SMR" id="Q6DI40"/>
<dbReference type="FunCoup" id="Q6DI40">
    <property type="interactions" value="635"/>
</dbReference>
<dbReference type="STRING" id="7955.ENSDARP00000051311"/>
<dbReference type="PaxDb" id="7955-ENSDARP00000051311"/>
<dbReference type="Ensembl" id="ENSDART00000051312">
    <property type="protein sequence ID" value="ENSDARP00000051311"/>
    <property type="gene ID" value="ENSDARG00000035406"/>
</dbReference>
<dbReference type="Ensembl" id="ENSDART00000192784">
    <property type="protein sequence ID" value="ENSDARP00000156436"/>
    <property type="gene ID" value="ENSDARG00000111770"/>
</dbReference>
<dbReference type="GeneID" id="436995"/>
<dbReference type="KEGG" id="dre:436995"/>
<dbReference type="AGR" id="ZFIN:ZDB-GENE-040718-480"/>
<dbReference type="CTD" id="23548"/>
<dbReference type="ZFIN" id="ZDB-GENE-040718-480">
    <property type="gene designation" value="ttc33"/>
</dbReference>
<dbReference type="eggNOG" id="KOG0553">
    <property type="taxonomic scope" value="Eukaryota"/>
</dbReference>
<dbReference type="HOGENOM" id="CLU_1061581_0_0_1"/>
<dbReference type="InParanoid" id="Q6DI40"/>
<dbReference type="OMA" id="WQEDLKW"/>
<dbReference type="OrthoDB" id="2423701at2759"/>
<dbReference type="PhylomeDB" id="Q6DI40"/>
<dbReference type="TreeFam" id="TF332142"/>
<dbReference type="PRO" id="PR:Q6DI40"/>
<dbReference type="Proteomes" id="UP000000437">
    <property type="component" value="Alternate scaffold 5"/>
</dbReference>
<dbReference type="Proteomes" id="UP000000437">
    <property type="component" value="Chromosome 5"/>
</dbReference>
<dbReference type="Bgee" id="ENSDARG00000035406">
    <property type="expression patterns" value="Expressed in muscle tissue and 20 other cell types or tissues"/>
</dbReference>
<dbReference type="Gene3D" id="1.25.40.10">
    <property type="entry name" value="Tetratricopeptide repeat domain"/>
    <property type="match status" value="1"/>
</dbReference>
<dbReference type="InterPro" id="IPR052658">
    <property type="entry name" value="TPR-containing"/>
</dbReference>
<dbReference type="InterPro" id="IPR011990">
    <property type="entry name" value="TPR-like_helical_dom_sf"/>
</dbReference>
<dbReference type="InterPro" id="IPR019734">
    <property type="entry name" value="TPR_rpt"/>
</dbReference>
<dbReference type="PANTHER" id="PTHR15544">
    <property type="entry name" value="OSMOSIS RESPONSIVE FACTOR"/>
    <property type="match status" value="1"/>
</dbReference>
<dbReference type="PANTHER" id="PTHR15544:SF0">
    <property type="entry name" value="TETRATRICOPEPTIDE REPEAT PROTEIN 33"/>
    <property type="match status" value="1"/>
</dbReference>
<dbReference type="SMART" id="SM00028">
    <property type="entry name" value="TPR"/>
    <property type="match status" value="2"/>
</dbReference>
<dbReference type="SUPFAM" id="SSF48452">
    <property type="entry name" value="TPR-like"/>
    <property type="match status" value="1"/>
</dbReference>
<dbReference type="PROSITE" id="PS50005">
    <property type="entry name" value="TPR"/>
    <property type="match status" value="2"/>
</dbReference>
<dbReference type="PROSITE" id="PS50293">
    <property type="entry name" value="TPR_REGION"/>
    <property type="match status" value="1"/>
</dbReference>
<protein>
    <recommendedName>
        <fullName>Tetratricopeptide repeat protein 33</fullName>
        <shortName>TPR repeat protein 33</shortName>
    </recommendedName>
</protein>
<evidence type="ECO:0000256" key="1">
    <source>
        <dbReference type="SAM" id="MobiDB-lite"/>
    </source>
</evidence>
<proteinExistence type="evidence at transcript level"/>
<feature type="chain" id="PRO_0000287517" description="Tetratricopeptide repeat protein 33">
    <location>
        <begin position="1"/>
        <end position="268"/>
    </location>
</feature>
<feature type="repeat" description="TPR 1">
    <location>
        <begin position="60"/>
        <end position="93"/>
    </location>
</feature>
<feature type="repeat" description="TPR 2">
    <location>
        <begin position="94"/>
        <end position="127"/>
    </location>
</feature>
<feature type="repeat" description="TPR 3">
    <location>
        <begin position="128"/>
        <end position="161"/>
    </location>
</feature>
<feature type="region of interest" description="Disordered" evidence="1">
    <location>
        <begin position="14"/>
        <end position="34"/>
    </location>
</feature>
<feature type="region of interest" description="Disordered" evidence="1">
    <location>
        <begin position="249"/>
        <end position="268"/>
    </location>
</feature>
<feature type="compositionally biased region" description="Acidic residues" evidence="1">
    <location>
        <begin position="24"/>
        <end position="34"/>
    </location>
</feature>
<accession>Q6DI40</accession>
<reference key="1">
    <citation type="journal article" date="2013" name="Nature">
        <title>The zebrafish reference genome sequence and its relationship to the human genome.</title>
        <authorList>
            <person name="Howe K."/>
            <person name="Clark M.D."/>
            <person name="Torroja C.F."/>
            <person name="Torrance J."/>
            <person name="Berthelot C."/>
            <person name="Muffato M."/>
            <person name="Collins J.E."/>
            <person name="Humphray S."/>
            <person name="McLaren K."/>
            <person name="Matthews L."/>
            <person name="McLaren S."/>
            <person name="Sealy I."/>
            <person name="Caccamo M."/>
            <person name="Churcher C."/>
            <person name="Scott C."/>
            <person name="Barrett J.C."/>
            <person name="Koch R."/>
            <person name="Rauch G.J."/>
            <person name="White S."/>
            <person name="Chow W."/>
            <person name="Kilian B."/>
            <person name="Quintais L.T."/>
            <person name="Guerra-Assuncao J.A."/>
            <person name="Zhou Y."/>
            <person name="Gu Y."/>
            <person name="Yen J."/>
            <person name="Vogel J.H."/>
            <person name="Eyre T."/>
            <person name="Redmond S."/>
            <person name="Banerjee R."/>
            <person name="Chi J."/>
            <person name="Fu B."/>
            <person name="Langley E."/>
            <person name="Maguire S.F."/>
            <person name="Laird G.K."/>
            <person name="Lloyd D."/>
            <person name="Kenyon E."/>
            <person name="Donaldson S."/>
            <person name="Sehra H."/>
            <person name="Almeida-King J."/>
            <person name="Loveland J."/>
            <person name="Trevanion S."/>
            <person name="Jones M."/>
            <person name="Quail M."/>
            <person name="Willey D."/>
            <person name="Hunt A."/>
            <person name="Burton J."/>
            <person name="Sims S."/>
            <person name="McLay K."/>
            <person name="Plumb B."/>
            <person name="Davis J."/>
            <person name="Clee C."/>
            <person name="Oliver K."/>
            <person name="Clark R."/>
            <person name="Riddle C."/>
            <person name="Elliot D."/>
            <person name="Threadgold G."/>
            <person name="Harden G."/>
            <person name="Ware D."/>
            <person name="Begum S."/>
            <person name="Mortimore B."/>
            <person name="Kerry G."/>
            <person name="Heath P."/>
            <person name="Phillimore B."/>
            <person name="Tracey A."/>
            <person name="Corby N."/>
            <person name="Dunn M."/>
            <person name="Johnson C."/>
            <person name="Wood J."/>
            <person name="Clark S."/>
            <person name="Pelan S."/>
            <person name="Griffiths G."/>
            <person name="Smith M."/>
            <person name="Glithero R."/>
            <person name="Howden P."/>
            <person name="Barker N."/>
            <person name="Lloyd C."/>
            <person name="Stevens C."/>
            <person name="Harley J."/>
            <person name="Holt K."/>
            <person name="Panagiotidis G."/>
            <person name="Lovell J."/>
            <person name="Beasley H."/>
            <person name="Henderson C."/>
            <person name="Gordon D."/>
            <person name="Auger K."/>
            <person name="Wright D."/>
            <person name="Collins J."/>
            <person name="Raisen C."/>
            <person name="Dyer L."/>
            <person name="Leung K."/>
            <person name="Robertson L."/>
            <person name="Ambridge K."/>
            <person name="Leongamornlert D."/>
            <person name="McGuire S."/>
            <person name="Gilderthorp R."/>
            <person name="Griffiths C."/>
            <person name="Manthravadi D."/>
            <person name="Nichol S."/>
            <person name="Barker G."/>
            <person name="Whitehead S."/>
            <person name="Kay M."/>
            <person name="Brown J."/>
            <person name="Murnane C."/>
            <person name="Gray E."/>
            <person name="Humphries M."/>
            <person name="Sycamore N."/>
            <person name="Barker D."/>
            <person name="Saunders D."/>
            <person name="Wallis J."/>
            <person name="Babbage A."/>
            <person name="Hammond S."/>
            <person name="Mashreghi-Mohammadi M."/>
            <person name="Barr L."/>
            <person name="Martin S."/>
            <person name="Wray P."/>
            <person name="Ellington A."/>
            <person name="Matthews N."/>
            <person name="Ellwood M."/>
            <person name="Woodmansey R."/>
            <person name="Clark G."/>
            <person name="Cooper J."/>
            <person name="Tromans A."/>
            <person name="Grafham D."/>
            <person name="Skuce C."/>
            <person name="Pandian R."/>
            <person name="Andrews R."/>
            <person name="Harrison E."/>
            <person name="Kimberley A."/>
            <person name="Garnett J."/>
            <person name="Fosker N."/>
            <person name="Hall R."/>
            <person name="Garner P."/>
            <person name="Kelly D."/>
            <person name="Bird C."/>
            <person name="Palmer S."/>
            <person name="Gehring I."/>
            <person name="Berger A."/>
            <person name="Dooley C.M."/>
            <person name="Ersan-Urun Z."/>
            <person name="Eser C."/>
            <person name="Geiger H."/>
            <person name="Geisler M."/>
            <person name="Karotki L."/>
            <person name="Kirn A."/>
            <person name="Konantz J."/>
            <person name="Konantz M."/>
            <person name="Oberlander M."/>
            <person name="Rudolph-Geiger S."/>
            <person name="Teucke M."/>
            <person name="Lanz C."/>
            <person name="Raddatz G."/>
            <person name="Osoegawa K."/>
            <person name="Zhu B."/>
            <person name="Rapp A."/>
            <person name="Widaa S."/>
            <person name="Langford C."/>
            <person name="Yang F."/>
            <person name="Schuster S.C."/>
            <person name="Carter N.P."/>
            <person name="Harrow J."/>
            <person name="Ning Z."/>
            <person name="Herrero J."/>
            <person name="Searle S.M."/>
            <person name="Enright A."/>
            <person name="Geisler R."/>
            <person name="Plasterk R.H."/>
            <person name="Lee C."/>
            <person name="Westerfield M."/>
            <person name="de Jong P.J."/>
            <person name="Zon L.I."/>
            <person name="Postlethwait J.H."/>
            <person name="Nusslein-Volhard C."/>
            <person name="Hubbard T.J."/>
            <person name="Roest Crollius H."/>
            <person name="Rogers J."/>
            <person name="Stemple D.L."/>
        </authorList>
    </citation>
    <scope>NUCLEOTIDE SEQUENCE [LARGE SCALE GENOMIC DNA]</scope>
    <source>
        <strain>Tuebingen</strain>
    </source>
</reference>
<reference key="2">
    <citation type="submission" date="2004-07" db="EMBL/GenBank/DDBJ databases">
        <authorList>
            <consortium name="NIH - Zebrafish Gene Collection (ZGC) project"/>
        </authorList>
    </citation>
    <scope>NUCLEOTIDE SEQUENCE [LARGE SCALE MRNA]</scope>
    <source>
        <tissue>Embryo</tissue>
    </source>
</reference>
<organism>
    <name type="scientific">Danio rerio</name>
    <name type="common">Zebrafish</name>
    <name type="synonym">Brachydanio rerio</name>
    <dbReference type="NCBI Taxonomy" id="7955"/>
    <lineage>
        <taxon>Eukaryota</taxon>
        <taxon>Metazoa</taxon>
        <taxon>Chordata</taxon>
        <taxon>Craniata</taxon>
        <taxon>Vertebrata</taxon>
        <taxon>Euteleostomi</taxon>
        <taxon>Actinopterygii</taxon>
        <taxon>Neopterygii</taxon>
        <taxon>Teleostei</taxon>
        <taxon>Ostariophysi</taxon>
        <taxon>Cypriniformes</taxon>
        <taxon>Danionidae</taxon>
        <taxon>Danioninae</taxon>
        <taxon>Danio</taxon>
    </lineage>
</organism>
<gene>
    <name type="primary">ttc33</name>
    <name type="ORF">si:dkey-204l11.4</name>
    <name type="ORF">zgc:86619</name>
</gene>
<sequence length="268" mass="30758">MASFGWKRKVGERVSKQTVQQFEQDSEQADEDEVEREGVDWLHVIKRKREVLLEDCAAKSKRLKEEGALLAEQDRNWEALKKWDEAVQLTPEDAVLYEMKSQVLITLGEVFLAVQSAEMATRLRPIWWEAWQTLGRAQLSLGEVELAVRSFQVALHLHPSERPLWEEDLNWALKLRENQQSLREKASQVDEARRLLVEAPELKGDYDFESDEVIEACSAMADRQKQYEDLKKKAVVVDAHGEAKEMLVEGDDNPTSSSQSVLIKARGL</sequence>